<reference key="1">
    <citation type="journal article" date="2001" name="Nature">
        <title>Genome sequence of enterohaemorrhagic Escherichia coli O157:H7.</title>
        <authorList>
            <person name="Perna N.T."/>
            <person name="Plunkett G. III"/>
            <person name="Burland V."/>
            <person name="Mau B."/>
            <person name="Glasner J.D."/>
            <person name="Rose D.J."/>
            <person name="Mayhew G.F."/>
            <person name="Evans P.S."/>
            <person name="Gregor J."/>
            <person name="Kirkpatrick H.A."/>
            <person name="Posfai G."/>
            <person name="Hackett J."/>
            <person name="Klink S."/>
            <person name="Boutin A."/>
            <person name="Shao Y."/>
            <person name="Miller L."/>
            <person name="Grotbeck E.J."/>
            <person name="Davis N.W."/>
            <person name="Lim A."/>
            <person name="Dimalanta E.T."/>
            <person name="Potamousis K."/>
            <person name="Apodaca J."/>
            <person name="Anantharaman T.S."/>
            <person name="Lin J."/>
            <person name="Yen G."/>
            <person name="Schwartz D.C."/>
            <person name="Welch R.A."/>
            <person name="Blattner F.R."/>
        </authorList>
    </citation>
    <scope>NUCLEOTIDE SEQUENCE [LARGE SCALE GENOMIC DNA]</scope>
    <source>
        <strain>O157:H7 / EDL933 / ATCC 700927 / EHEC</strain>
    </source>
</reference>
<reference key="2">
    <citation type="journal article" date="2001" name="DNA Res.">
        <title>Complete genome sequence of enterohemorrhagic Escherichia coli O157:H7 and genomic comparison with a laboratory strain K-12.</title>
        <authorList>
            <person name="Hayashi T."/>
            <person name="Makino K."/>
            <person name="Ohnishi M."/>
            <person name="Kurokawa K."/>
            <person name="Ishii K."/>
            <person name="Yokoyama K."/>
            <person name="Han C.-G."/>
            <person name="Ohtsubo E."/>
            <person name="Nakayama K."/>
            <person name="Murata T."/>
            <person name="Tanaka M."/>
            <person name="Tobe T."/>
            <person name="Iida T."/>
            <person name="Takami H."/>
            <person name="Honda T."/>
            <person name="Sasakawa C."/>
            <person name="Ogasawara N."/>
            <person name="Yasunaga T."/>
            <person name="Kuhara S."/>
            <person name="Shiba T."/>
            <person name="Hattori M."/>
            <person name="Shinagawa H."/>
        </authorList>
    </citation>
    <scope>NUCLEOTIDE SEQUENCE [LARGE SCALE GENOMIC DNA]</scope>
    <source>
        <strain>O157:H7 / Sakai / RIMD 0509952 / EHEC</strain>
    </source>
</reference>
<feature type="chain" id="PRO_0000060112" description="Molybdenum transport system permease protein ModB">
    <location>
        <begin position="1"/>
        <end position="229"/>
    </location>
</feature>
<feature type="topological domain" description="Periplasmic" evidence="2">
    <location>
        <begin position="1"/>
        <end position="16"/>
    </location>
</feature>
<feature type="transmembrane region" description="Helical" evidence="3">
    <location>
        <begin position="17"/>
        <end position="37"/>
    </location>
</feature>
<feature type="topological domain" description="Cytoplasmic" evidence="2">
    <location>
        <begin position="38"/>
        <end position="49"/>
    </location>
</feature>
<feature type="transmembrane region" description="Helical" evidence="3">
    <location>
        <begin position="50"/>
        <end position="70"/>
    </location>
</feature>
<feature type="topological domain" description="Periplasmic" evidence="2">
    <location>
        <begin position="71"/>
        <end position="83"/>
    </location>
</feature>
<feature type="transmembrane region" description="Helical" evidence="3">
    <location>
        <begin position="84"/>
        <end position="104"/>
    </location>
</feature>
<feature type="topological domain" description="Cytoplasmic" evidence="2">
    <location>
        <begin position="105"/>
        <end position="136"/>
    </location>
</feature>
<feature type="transmembrane region" description="Helical" evidence="3">
    <location>
        <begin position="137"/>
        <end position="157"/>
    </location>
</feature>
<feature type="topological domain" description="Periplasmic" evidence="2">
    <location>
        <begin position="158"/>
        <end position="201"/>
    </location>
</feature>
<feature type="transmembrane region" description="Helical" evidence="3">
    <location>
        <begin position="202"/>
        <end position="222"/>
    </location>
</feature>
<feature type="topological domain" description="Cytoplasmic" evidence="2">
    <location>
        <begin position="223"/>
        <end position="229"/>
    </location>
</feature>
<feature type="domain" description="ABC transmembrane type-1" evidence="3">
    <location>
        <begin position="11"/>
        <end position="219"/>
    </location>
</feature>
<comment type="function">
    <text evidence="1">Part of the binding-protein-dependent transport system for molybdenum; probably responsible for the translocation of the substrate across the membrane.</text>
</comment>
<comment type="subcellular location">
    <subcellularLocation>
        <location evidence="1">Cell inner membrane</location>
        <topology evidence="3">Multi-pass membrane protein</topology>
    </subcellularLocation>
</comment>
<comment type="similarity">
    <text evidence="4">Belongs to the binding-protein-dependent transport system permease family. CysTW subfamily.</text>
</comment>
<dbReference type="EMBL" id="AE005174">
    <property type="protein sequence ID" value="AAG55093.1"/>
    <property type="molecule type" value="Genomic_DNA"/>
</dbReference>
<dbReference type="EMBL" id="BA000007">
    <property type="protein sequence ID" value="BAB34215.1"/>
    <property type="molecule type" value="Genomic_DNA"/>
</dbReference>
<dbReference type="PIR" id="A85579">
    <property type="entry name" value="A85579"/>
</dbReference>
<dbReference type="PIR" id="H90727">
    <property type="entry name" value="H90727"/>
</dbReference>
<dbReference type="RefSeq" id="NP_308819.1">
    <property type="nucleotide sequence ID" value="NC_002695.1"/>
</dbReference>
<dbReference type="RefSeq" id="WP_000604034.1">
    <property type="nucleotide sequence ID" value="NZ_VOAI01000019.1"/>
</dbReference>
<dbReference type="SMR" id="P0AF02"/>
<dbReference type="STRING" id="155864.Z0934"/>
<dbReference type="GeneID" id="917529"/>
<dbReference type="GeneID" id="93776717"/>
<dbReference type="KEGG" id="ece:Z0934"/>
<dbReference type="KEGG" id="ecs:ECs_0792"/>
<dbReference type="PATRIC" id="fig|386585.9.peg.912"/>
<dbReference type="eggNOG" id="COG4149">
    <property type="taxonomic scope" value="Bacteria"/>
</dbReference>
<dbReference type="HOGENOM" id="CLU_016047_14_3_6"/>
<dbReference type="OMA" id="MYSFIET"/>
<dbReference type="Proteomes" id="UP000000558">
    <property type="component" value="Chromosome"/>
</dbReference>
<dbReference type="Proteomes" id="UP000002519">
    <property type="component" value="Chromosome"/>
</dbReference>
<dbReference type="GO" id="GO:0005886">
    <property type="term" value="C:plasma membrane"/>
    <property type="evidence" value="ECO:0007669"/>
    <property type="project" value="UniProtKB-SubCell"/>
</dbReference>
<dbReference type="GO" id="GO:0015098">
    <property type="term" value="F:molybdate ion transmembrane transporter activity"/>
    <property type="evidence" value="ECO:0007669"/>
    <property type="project" value="InterPro"/>
</dbReference>
<dbReference type="CDD" id="cd06261">
    <property type="entry name" value="TM_PBP2"/>
    <property type="match status" value="1"/>
</dbReference>
<dbReference type="FunFam" id="1.10.3720.10:FF:000018">
    <property type="entry name" value="Molybdenum transport system permease"/>
    <property type="match status" value="1"/>
</dbReference>
<dbReference type="Gene3D" id="1.10.3720.10">
    <property type="entry name" value="MetI-like"/>
    <property type="match status" value="1"/>
</dbReference>
<dbReference type="InterPro" id="IPR000515">
    <property type="entry name" value="MetI-like"/>
</dbReference>
<dbReference type="InterPro" id="IPR035906">
    <property type="entry name" value="MetI-like_sf"/>
</dbReference>
<dbReference type="InterPro" id="IPR011867">
    <property type="entry name" value="ModB_ABC"/>
</dbReference>
<dbReference type="NCBIfam" id="TIGR02141">
    <property type="entry name" value="modB_ABC"/>
    <property type="match status" value="1"/>
</dbReference>
<dbReference type="NCBIfam" id="NF006939">
    <property type="entry name" value="PRK09421.1"/>
    <property type="match status" value="1"/>
</dbReference>
<dbReference type="PANTHER" id="PTHR30183">
    <property type="entry name" value="MOLYBDENUM TRANSPORT SYSTEM PERMEASE PROTEIN MODB"/>
    <property type="match status" value="1"/>
</dbReference>
<dbReference type="PANTHER" id="PTHR30183:SF3">
    <property type="entry name" value="MOLYBDENUM TRANSPORT SYSTEM PERMEASE PROTEIN MODB"/>
    <property type="match status" value="1"/>
</dbReference>
<dbReference type="Pfam" id="PF00528">
    <property type="entry name" value="BPD_transp_1"/>
    <property type="match status" value="1"/>
</dbReference>
<dbReference type="SUPFAM" id="SSF161098">
    <property type="entry name" value="MetI-like"/>
    <property type="match status" value="1"/>
</dbReference>
<dbReference type="PROSITE" id="PS50928">
    <property type="entry name" value="ABC_TM1"/>
    <property type="match status" value="1"/>
</dbReference>
<accession>P0AF02</accession>
<accession>P09834</accession>
<accession>P77537</accession>
<evidence type="ECO:0000250" key="1"/>
<evidence type="ECO:0000255" key="2"/>
<evidence type="ECO:0000255" key="3">
    <source>
        <dbReference type="PROSITE-ProRule" id="PRU00441"/>
    </source>
</evidence>
<evidence type="ECO:0000305" key="4"/>
<name>MODB_ECO57</name>
<proteinExistence type="inferred from homology"/>
<gene>
    <name type="primary">modB</name>
    <name type="ordered locus">Z0934</name>
    <name type="ordered locus">ECs0792</name>
</gene>
<organism>
    <name type="scientific">Escherichia coli O157:H7</name>
    <dbReference type="NCBI Taxonomy" id="83334"/>
    <lineage>
        <taxon>Bacteria</taxon>
        <taxon>Pseudomonadati</taxon>
        <taxon>Pseudomonadota</taxon>
        <taxon>Gammaproteobacteria</taxon>
        <taxon>Enterobacterales</taxon>
        <taxon>Enterobacteriaceae</taxon>
        <taxon>Escherichia</taxon>
    </lineage>
</organism>
<keyword id="KW-0997">Cell inner membrane</keyword>
<keyword id="KW-1003">Cell membrane</keyword>
<keyword id="KW-0472">Membrane</keyword>
<keyword id="KW-0500">Molybdenum</keyword>
<keyword id="KW-1185">Reference proteome</keyword>
<keyword id="KW-0812">Transmembrane</keyword>
<keyword id="KW-1133">Transmembrane helix</keyword>
<keyword id="KW-0813">Transport</keyword>
<protein>
    <recommendedName>
        <fullName>Molybdenum transport system permease protein ModB</fullName>
    </recommendedName>
</protein>
<sequence>MILTDPEWQAVLLSLKVSSLAVLFSLPFGIFFAWLLVRCTFPGKALLDSVLHLPLVLPPVVVGYLLLVSMGRRGFIGERLYDWFGITFAFSWRGAVLAAAVMSFPLMVRAIRLALEGVDVKLEQAARTLGAGRWRVFFTITLPLTLPGIIVGTVLAFARSLGEFGATITFVSNIPGETRTIPSAMYTLIQTPGGESGAARLCIISIALAMISLLISEWLARISRERAGR</sequence>